<sequence length="122" mass="13033">MIQTETRLKVADNSGAREILTIKVLGGSGRKFANIGDIIVASVKQATPGGAVKKGDVVKAVIVRTKTGARRADGSYIKFDENAAVIIREDKNPRGTRIFGPVARELRDGGFMKIVSLAPEVL</sequence>
<organism>
    <name type="scientific">Streptococcus suis (strain 98HAH33)</name>
    <dbReference type="NCBI Taxonomy" id="391296"/>
    <lineage>
        <taxon>Bacteria</taxon>
        <taxon>Bacillati</taxon>
        <taxon>Bacillota</taxon>
        <taxon>Bacilli</taxon>
        <taxon>Lactobacillales</taxon>
        <taxon>Streptococcaceae</taxon>
        <taxon>Streptococcus</taxon>
    </lineage>
</organism>
<accession>A4VYQ3</accession>
<evidence type="ECO:0000255" key="1">
    <source>
        <dbReference type="HAMAP-Rule" id="MF_01367"/>
    </source>
</evidence>
<evidence type="ECO:0000305" key="2"/>
<gene>
    <name evidence="1" type="primary">rplN</name>
    <name type="ordered locus">SSU98_0082</name>
</gene>
<feature type="chain" id="PRO_1000055725" description="Large ribosomal subunit protein uL14">
    <location>
        <begin position="1"/>
        <end position="122"/>
    </location>
</feature>
<keyword id="KW-0687">Ribonucleoprotein</keyword>
<keyword id="KW-0689">Ribosomal protein</keyword>
<keyword id="KW-0694">RNA-binding</keyword>
<keyword id="KW-0699">rRNA-binding</keyword>
<dbReference type="EMBL" id="CP000408">
    <property type="protein sequence ID" value="ABP91242.1"/>
    <property type="molecule type" value="Genomic_DNA"/>
</dbReference>
<dbReference type="SMR" id="A4VYQ3"/>
<dbReference type="KEGG" id="ssv:SSU98_0082"/>
<dbReference type="HOGENOM" id="CLU_095071_2_1_9"/>
<dbReference type="GO" id="GO:0022625">
    <property type="term" value="C:cytosolic large ribosomal subunit"/>
    <property type="evidence" value="ECO:0007669"/>
    <property type="project" value="TreeGrafter"/>
</dbReference>
<dbReference type="GO" id="GO:0070180">
    <property type="term" value="F:large ribosomal subunit rRNA binding"/>
    <property type="evidence" value="ECO:0007669"/>
    <property type="project" value="TreeGrafter"/>
</dbReference>
<dbReference type="GO" id="GO:0003735">
    <property type="term" value="F:structural constituent of ribosome"/>
    <property type="evidence" value="ECO:0007669"/>
    <property type="project" value="InterPro"/>
</dbReference>
<dbReference type="GO" id="GO:0006412">
    <property type="term" value="P:translation"/>
    <property type="evidence" value="ECO:0007669"/>
    <property type="project" value="UniProtKB-UniRule"/>
</dbReference>
<dbReference type="CDD" id="cd00337">
    <property type="entry name" value="Ribosomal_uL14"/>
    <property type="match status" value="1"/>
</dbReference>
<dbReference type="FunFam" id="2.40.150.20:FF:000001">
    <property type="entry name" value="50S ribosomal protein L14"/>
    <property type="match status" value="1"/>
</dbReference>
<dbReference type="Gene3D" id="2.40.150.20">
    <property type="entry name" value="Ribosomal protein L14"/>
    <property type="match status" value="1"/>
</dbReference>
<dbReference type="HAMAP" id="MF_01367">
    <property type="entry name" value="Ribosomal_uL14"/>
    <property type="match status" value="1"/>
</dbReference>
<dbReference type="InterPro" id="IPR000218">
    <property type="entry name" value="Ribosomal_uL14"/>
</dbReference>
<dbReference type="InterPro" id="IPR005745">
    <property type="entry name" value="Ribosomal_uL14_bac-type"/>
</dbReference>
<dbReference type="InterPro" id="IPR019972">
    <property type="entry name" value="Ribosomal_uL14_CS"/>
</dbReference>
<dbReference type="InterPro" id="IPR036853">
    <property type="entry name" value="Ribosomal_uL14_sf"/>
</dbReference>
<dbReference type="NCBIfam" id="TIGR01067">
    <property type="entry name" value="rplN_bact"/>
    <property type="match status" value="1"/>
</dbReference>
<dbReference type="PANTHER" id="PTHR11761">
    <property type="entry name" value="50S/60S RIBOSOMAL PROTEIN L14/L23"/>
    <property type="match status" value="1"/>
</dbReference>
<dbReference type="PANTHER" id="PTHR11761:SF3">
    <property type="entry name" value="LARGE RIBOSOMAL SUBUNIT PROTEIN UL14M"/>
    <property type="match status" value="1"/>
</dbReference>
<dbReference type="Pfam" id="PF00238">
    <property type="entry name" value="Ribosomal_L14"/>
    <property type="match status" value="1"/>
</dbReference>
<dbReference type="SMART" id="SM01374">
    <property type="entry name" value="Ribosomal_L14"/>
    <property type="match status" value="1"/>
</dbReference>
<dbReference type="SUPFAM" id="SSF50193">
    <property type="entry name" value="Ribosomal protein L14"/>
    <property type="match status" value="1"/>
</dbReference>
<dbReference type="PROSITE" id="PS00049">
    <property type="entry name" value="RIBOSOMAL_L14"/>
    <property type="match status" value="1"/>
</dbReference>
<name>RL14_STRS2</name>
<protein>
    <recommendedName>
        <fullName evidence="1">Large ribosomal subunit protein uL14</fullName>
    </recommendedName>
    <alternativeName>
        <fullName evidence="2">50S ribosomal protein L14</fullName>
    </alternativeName>
</protein>
<proteinExistence type="inferred from homology"/>
<comment type="function">
    <text evidence="1">Binds to 23S rRNA. Forms part of two intersubunit bridges in the 70S ribosome.</text>
</comment>
<comment type="subunit">
    <text evidence="1">Part of the 50S ribosomal subunit. Forms a cluster with proteins L3 and L19. In the 70S ribosome, L14 and L19 interact and together make contacts with the 16S rRNA in bridges B5 and B8.</text>
</comment>
<comment type="similarity">
    <text evidence="1">Belongs to the universal ribosomal protein uL14 family.</text>
</comment>
<reference key="1">
    <citation type="journal article" date="2007" name="PLoS ONE">
        <title>A glimpse of streptococcal toxic shock syndrome from comparative genomics of S. suis 2 Chinese isolates.</title>
        <authorList>
            <person name="Chen C."/>
            <person name="Tang J."/>
            <person name="Dong W."/>
            <person name="Wang C."/>
            <person name="Feng Y."/>
            <person name="Wang J."/>
            <person name="Zheng F."/>
            <person name="Pan X."/>
            <person name="Liu D."/>
            <person name="Li M."/>
            <person name="Song Y."/>
            <person name="Zhu X."/>
            <person name="Sun H."/>
            <person name="Feng T."/>
            <person name="Guo Z."/>
            <person name="Ju A."/>
            <person name="Ge J."/>
            <person name="Dong Y."/>
            <person name="Sun W."/>
            <person name="Jiang Y."/>
            <person name="Wang J."/>
            <person name="Yan J."/>
            <person name="Yang H."/>
            <person name="Wang X."/>
            <person name="Gao G.F."/>
            <person name="Yang R."/>
            <person name="Wang J."/>
            <person name="Yu J."/>
        </authorList>
    </citation>
    <scope>NUCLEOTIDE SEQUENCE [LARGE SCALE GENOMIC DNA]</scope>
    <source>
        <strain>98HAH33</strain>
    </source>
</reference>